<evidence type="ECO:0000255" key="1">
    <source>
        <dbReference type="HAMAP-Rule" id="MF_00453"/>
    </source>
</evidence>
<proteinExistence type="inferred from homology"/>
<comment type="function">
    <text evidence="1">Involved in the gluconeogenesis. Catalyzes the conversion of oxaloacetate (OAA) to phosphoenolpyruvate (PEP) through direct phosphoryl transfer between the nucleoside triphosphate and OAA.</text>
</comment>
<comment type="catalytic activity">
    <reaction evidence="1">
        <text>oxaloacetate + ATP = phosphoenolpyruvate + ADP + CO2</text>
        <dbReference type="Rhea" id="RHEA:18617"/>
        <dbReference type="ChEBI" id="CHEBI:16452"/>
        <dbReference type="ChEBI" id="CHEBI:16526"/>
        <dbReference type="ChEBI" id="CHEBI:30616"/>
        <dbReference type="ChEBI" id="CHEBI:58702"/>
        <dbReference type="ChEBI" id="CHEBI:456216"/>
        <dbReference type="EC" id="4.1.1.49"/>
    </reaction>
</comment>
<comment type="cofactor">
    <cofactor evidence="1">
        <name>Mn(2+)</name>
        <dbReference type="ChEBI" id="CHEBI:29035"/>
    </cofactor>
    <text evidence="1">Binds 1 Mn(2+) ion per subunit.</text>
</comment>
<comment type="pathway">
    <text evidence="1">Carbohydrate biosynthesis; gluconeogenesis.</text>
</comment>
<comment type="subcellular location">
    <subcellularLocation>
        <location evidence="1">Cytoplasm</location>
    </subcellularLocation>
</comment>
<comment type="similarity">
    <text evidence="1">Belongs to the phosphoenolpyruvate carboxykinase (ATP) family.</text>
</comment>
<sequence>MEMFGVHNPAIELATVGLGGAASVRYNFSAAALYEEAIRRGEAELTAQGALRAITGQHTGRSPRDKFVVRDINTDGEIWWDNNKPISPEHFAVLRDDMLAHAAGKELFVQDLVGGAEEGHALPTRVVTEFAWHSLFIRNLLIRPDTAALSSFVPKLTIIDLPSFKADPARHGCRSETVIACDLTNGLVLIGGTSYAGEMKKSVFTVLNYLLPAKGVMPMHCSANVGPDGDAAVFFGLSGTGKTTLSADPARTLIGDDEHGWSENGIFNFEGGCYAKTIRLSAEAEPEIYATTQRFGTVLENVVLNESREPDFNDGSLTENTRCAYPMDFIPNASKTGRAGHPKTIIMLTADAFGVMPPIARLTPDQAMYHFLSGYTAKVAGTEKGVVEPEATFSTCFGAPFMPRHPAEYGNLLKELIGRHGVQCWLVNTGWTGGAYGTGKRMPIKATRALLAAALSGELGQVEFRADTNFGFAVPVSVHGVDGSILDPRSTWADKAAYDAQAEKLVSMFIANFAKFENHVDGGVRDAAPGVKVAAE</sequence>
<accession>Q1MNG2</accession>
<reference key="1">
    <citation type="journal article" date="2006" name="Genome Biol.">
        <title>The genome of Rhizobium leguminosarum has recognizable core and accessory components.</title>
        <authorList>
            <person name="Young J.P.W."/>
            <person name="Crossman L.C."/>
            <person name="Johnston A.W.B."/>
            <person name="Thomson N.R."/>
            <person name="Ghazoui Z.F."/>
            <person name="Hull K.H."/>
            <person name="Wexler M."/>
            <person name="Curson A.R.J."/>
            <person name="Todd J.D."/>
            <person name="Poole P.S."/>
            <person name="Mauchline T.H."/>
            <person name="East A.K."/>
            <person name="Quail M.A."/>
            <person name="Churcher C."/>
            <person name="Arrowsmith C."/>
            <person name="Cherevach I."/>
            <person name="Chillingworth T."/>
            <person name="Clarke K."/>
            <person name="Cronin A."/>
            <person name="Davis P."/>
            <person name="Fraser A."/>
            <person name="Hance Z."/>
            <person name="Hauser H."/>
            <person name="Jagels K."/>
            <person name="Moule S."/>
            <person name="Mungall K."/>
            <person name="Norbertczak H."/>
            <person name="Rabbinowitsch E."/>
            <person name="Sanders M."/>
            <person name="Simmonds M."/>
            <person name="Whitehead S."/>
            <person name="Parkhill J."/>
        </authorList>
    </citation>
    <scope>NUCLEOTIDE SEQUENCE [LARGE SCALE GENOMIC DNA]</scope>
    <source>
        <strain>DSM 114642 / LMG 32736 / 3841</strain>
    </source>
</reference>
<dbReference type="EC" id="4.1.1.49" evidence="1"/>
<dbReference type="EMBL" id="AM236080">
    <property type="protein sequence ID" value="CAK05525.1"/>
    <property type="molecule type" value="Genomic_DNA"/>
</dbReference>
<dbReference type="RefSeq" id="WP_011649863.1">
    <property type="nucleotide sequence ID" value="NC_008380.1"/>
</dbReference>
<dbReference type="SMR" id="Q1MNG2"/>
<dbReference type="EnsemblBacteria" id="CAK05525">
    <property type="protein sequence ID" value="CAK05525"/>
    <property type="gene ID" value="RL0037"/>
</dbReference>
<dbReference type="KEGG" id="rle:RL0037"/>
<dbReference type="eggNOG" id="COG1866">
    <property type="taxonomic scope" value="Bacteria"/>
</dbReference>
<dbReference type="HOGENOM" id="CLU_018247_0_1_5"/>
<dbReference type="UniPathway" id="UPA00138"/>
<dbReference type="Proteomes" id="UP000006575">
    <property type="component" value="Chromosome"/>
</dbReference>
<dbReference type="GO" id="GO:0005829">
    <property type="term" value="C:cytosol"/>
    <property type="evidence" value="ECO:0007669"/>
    <property type="project" value="TreeGrafter"/>
</dbReference>
<dbReference type="GO" id="GO:0005524">
    <property type="term" value="F:ATP binding"/>
    <property type="evidence" value="ECO:0007669"/>
    <property type="project" value="UniProtKB-UniRule"/>
</dbReference>
<dbReference type="GO" id="GO:0046872">
    <property type="term" value="F:metal ion binding"/>
    <property type="evidence" value="ECO:0007669"/>
    <property type="project" value="UniProtKB-KW"/>
</dbReference>
<dbReference type="GO" id="GO:0004612">
    <property type="term" value="F:phosphoenolpyruvate carboxykinase (ATP) activity"/>
    <property type="evidence" value="ECO:0007669"/>
    <property type="project" value="UniProtKB-UniRule"/>
</dbReference>
<dbReference type="GO" id="GO:0006094">
    <property type="term" value="P:gluconeogenesis"/>
    <property type="evidence" value="ECO:0007669"/>
    <property type="project" value="UniProtKB-UniRule"/>
</dbReference>
<dbReference type="CDD" id="cd00484">
    <property type="entry name" value="PEPCK_ATP"/>
    <property type="match status" value="1"/>
</dbReference>
<dbReference type="Gene3D" id="3.90.228.20">
    <property type="match status" value="1"/>
</dbReference>
<dbReference type="Gene3D" id="3.40.449.10">
    <property type="entry name" value="Phosphoenolpyruvate Carboxykinase, domain 1"/>
    <property type="match status" value="1"/>
</dbReference>
<dbReference type="Gene3D" id="2.170.8.10">
    <property type="entry name" value="Phosphoenolpyruvate Carboxykinase, domain 2"/>
    <property type="match status" value="1"/>
</dbReference>
<dbReference type="HAMAP" id="MF_00453">
    <property type="entry name" value="PEPCK_ATP"/>
    <property type="match status" value="1"/>
</dbReference>
<dbReference type="InterPro" id="IPR001272">
    <property type="entry name" value="PEP_carboxykinase_ATP"/>
</dbReference>
<dbReference type="InterPro" id="IPR013035">
    <property type="entry name" value="PEP_carboxykinase_C"/>
</dbReference>
<dbReference type="InterPro" id="IPR008210">
    <property type="entry name" value="PEP_carboxykinase_N"/>
</dbReference>
<dbReference type="InterPro" id="IPR015994">
    <property type="entry name" value="PEPCK_ATP_CS"/>
</dbReference>
<dbReference type="NCBIfam" id="TIGR00224">
    <property type="entry name" value="pckA"/>
    <property type="match status" value="1"/>
</dbReference>
<dbReference type="NCBIfam" id="NF006820">
    <property type="entry name" value="PRK09344.1-2"/>
    <property type="match status" value="1"/>
</dbReference>
<dbReference type="NCBIfam" id="NF006821">
    <property type="entry name" value="PRK09344.1-3"/>
    <property type="match status" value="1"/>
</dbReference>
<dbReference type="NCBIfam" id="NF006822">
    <property type="entry name" value="PRK09344.1-4"/>
    <property type="match status" value="1"/>
</dbReference>
<dbReference type="PANTHER" id="PTHR30031:SF0">
    <property type="entry name" value="PHOSPHOENOLPYRUVATE CARBOXYKINASE (ATP)"/>
    <property type="match status" value="1"/>
</dbReference>
<dbReference type="PANTHER" id="PTHR30031">
    <property type="entry name" value="PHOSPHOENOLPYRUVATE CARBOXYKINASE ATP"/>
    <property type="match status" value="1"/>
</dbReference>
<dbReference type="Pfam" id="PF01293">
    <property type="entry name" value="PEPCK_ATP"/>
    <property type="match status" value="1"/>
</dbReference>
<dbReference type="PIRSF" id="PIRSF006294">
    <property type="entry name" value="PEP_crbxkin"/>
    <property type="match status" value="1"/>
</dbReference>
<dbReference type="SUPFAM" id="SSF68923">
    <property type="entry name" value="PEP carboxykinase N-terminal domain"/>
    <property type="match status" value="1"/>
</dbReference>
<dbReference type="SUPFAM" id="SSF53795">
    <property type="entry name" value="PEP carboxykinase-like"/>
    <property type="match status" value="1"/>
</dbReference>
<dbReference type="PROSITE" id="PS00532">
    <property type="entry name" value="PEPCK_ATP"/>
    <property type="match status" value="1"/>
</dbReference>
<protein>
    <recommendedName>
        <fullName evidence="1">Phosphoenolpyruvate carboxykinase (ATP)</fullName>
        <shortName evidence="1">PCK</shortName>
        <shortName evidence="1">PEP carboxykinase</shortName>
        <shortName evidence="1">PEPCK</shortName>
        <ecNumber evidence="1">4.1.1.49</ecNumber>
    </recommendedName>
</protein>
<organism>
    <name type="scientific">Rhizobium johnstonii (strain DSM 114642 / LMG 32736 / 3841)</name>
    <name type="common">Rhizobium leguminosarum bv. viciae</name>
    <dbReference type="NCBI Taxonomy" id="216596"/>
    <lineage>
        <taxon>Bacteria</taxon>
        <taxon>Pseudomonadati</taxon>
        <taxon>Pseudomonadota</taxon>
        <taxon>Alphaproteobacteria</taxon>
        <taxon>Hyphomicrobiales</taxon>
        <taxon>Rhizobiaceae</taxon>
        <taxon>Rhizobium/Agrobacterium group</taxon>
        <taxon>Rhizobium</taxon>
        <taxon>Rhizobium johnstonii</taxon>
    </lineage>
</organism>
<name>PCKA_RHIJ3</name>
<keyword id="KW-0067">ATP-binding</keyword>
<keyword id="KW-0963">Cytoplasm</keyword>
<keyword id="KW-0210">Decarboxylase</keyword>
<keyword id="KW-0312">Gluconeogenesis</keyword>
<keyword id="KW-0456">Lyase</keyword>
<keyword id="KW-0464">Manganese</keyword>
<keyword id="KW-0479">Metal-binding</keyword>
<keyword id="KW-0547">Nucleotide-binding</keyword>
<feature type="chain" id="PRO_1000060307" description="Phosphoenolpyruvate carboxykinase (ATP)">
    <location>
        <begin position="1"/>
        <end position="536"/>
    </location>
</feature>
<feature type="binding site" evidence="1">
    <location>
        <position position="61"/>
    </location>
    <ligand>
        <name>substrate</name>
    </ligand>
</feature>
<feature type="binding site" evidence="1">
    <location>
        <position position="195"/>
    </location>
    <ligand>
        <name>substrate</name>
    </ligand>
</feature>
<feature type="binding site" evidence="1">
    <location>
        <position position="201"/>
    </location>
    <ligand>
        <name>ATP</name>
        <dbReference type="ChEBI" id="CHEBI:30616"/>
    </ligand>
</feature>
<feature type="binding site" evidence="1">
    <location>
        <position position="201"/>
    </location>
    <ligand>
        <name>Mn(2+)</name>
        <dbReference type="ChEBI" id="CHEBI:29035"/>
    </ligand>
</feature>
<feature type="binding site" evidence="1">
    <location>
        <position position="201"/>
    </location>
    <ligand>
        <name>substrate</name>
    </ligand>
</feature>
<feature type="binding site" evidence="1">
    <location>
        <position position="220"/>
    </location>
    <ligand>
        <name>ATP</name>
        <dbReference type="ChEBI" id="CHEBI:30616"/>
    </ligand>
</feature>
<feature type="binding site" evidence="1">
    <location>
        <position position="220"/>
    </location>
    <ligand>
        <name>Mn(2+)</name>
        <dbReference type="ChEBI" id="CHEBI:29035"/>
    </ligand>
</feature>
<feature type="binding site" evidence="1">
    <location>
        <begin position="236"/>
        <end position="244"/>
    </location>
    <ligand>
        <name>ATP</name>
        <dbReference type="ChEBI" id="CHEBI:30616"/>
    </ligand>
</feature>
<feature type="binding site" evidence="1">
    <location>
        <position position="257"/>
    </location>
    <ligand>
        <name>Mn(2+)</name>
        <dbReference type="ChEBI" id="CHEBI:29035"/>
    </ligand>
</feature>
<feature type="binding site" evidence="1">
    <location>
        <position position="285"/>
    </location>
    <ligand>
        <name>ATP</name>
        <dbReference type="ChEBI" id="CHEBI:30616"/>
    </ligand>
</feature>
<feature type="binding site" evidence="1">
    <location>
        <position position="322"/>
    </location>
    <ligand>
        <name>ATP</name>
        <dbReference type="ChEBI" id="CHEBI:30616"/>
    </ligand>
</feature>
<feature type="binding site" evidence="1">
    <location>
        <position position="322"/>
    </location>
    <ligand>
        <name>substrate</name>
    </ligand>
</feature>
<feature type="binding site" evidence="1">
    <location>
        <position position="447"/>
    </location>
    <ligand>
        <name>ATP</name>
        <dbReference type="ChEBI" id="CHEBI:30616"/>
    </ligand>
</feature>
<gene>
    <name evidence="1" type="primary">pckA</name>
    <name type="ordered locus">RL0037</name>
</gene>